<keyword id="KW-0238">DNA-binding</keyword>
<keyword id="KW-0843">Virulence</keyword>
<proteinExistence type="inferred from homology"/>
<name>VAPZ_DICNO</name>
<evidence type="ECO:0000255" key="1">
    <source>
        <dbReference type="PROSITE-ProRule" id="PRU00257"/>
    </source>
</evidence>
<evidence type="ECO:0000305" key="2"/>
<accession>Q46561</accession>
<gene>
    <name type="primary">vapA'</name>
</gene>
<protein>
    <recommendedName>
        <fullName>Virulence-associated protein A'</fullName>
    </recommendedName>
</protein>
<organism>
    <name type="scientific">Dichelobacter nodosus</name>
    <name type="common">Bacteroides nodosus</name>
    <dbReference type="NCBI Taxonomy" id="870"/>
    <lineage>
        <taxon>Bacteria</taxon>
        <taxon>Pseudomonadati</taxon>
        <taxon>Pseudomonadota</taxon>
        <taxon>Gammaproteobacteria</taxon>
        <taxon>Cardiobacteriales</taxon>
        <taxon>Cardiobacteriaceae</taxon>
        <taxon>Dichelobacter</taxon>
    </lineage>
</organism>
<reference key="1">
    <citation type="journal article" date="1994" name="J. Bacteriol.">
        <title>Genetic organization of the duplicated vap region of the Dichelobacter nodosus genome.</title>
        <authorList>
            <person name="Katz M.E."/>
            <person name="Wright C.L."/>
            <person name="Gartside T.S."/>
            <person name="Cheetham B.F."/>
            <person name="Doidge C.V."/>
            <person name="Moses E.K."/>
            <person name="Rood J.I."/>
        </authorList>
    </citation>
    <scope>NUCLEOTIDE SEQUENCE [GENOMIC DNA]</scope>
    <source>
        <strain>A198</strain>
    </source>
</reference>
<feature type="chain" id="PRO_0000149744" description="Virulence-associated protein A'">
    <location>
        <begin position="1"/>
        <end position="115"/>
    </location>
</feature>
<feature type="domain" description="HTH cro/C1-type" evidence="1">
    <location>
        <begin position="16"/>
        <end position="70"/>
    </location>
</feature>
<feature type="DNA-binding region" description="H-T-H motif" evidence="1">
    <location>
        <begin position="27"/>
        <end position="46"/>
    </location>
</feature>
<comment type="similarity">
    <text evidence="2">Belongs to the VapA/VapI family.</text>
</comment>
<sequence>MAPQRMKNPPHPGLLIKSDLDGLGINITEAAKALDVTRAALSEIINGKRGISAKMAWKLSKAFTNSDPEFWLALQAKYDLSQVGEQCADKVRVLWQPSSLDNEGIEVNSSENKVK</sequence>
<dbReference type="EMBL" id="L31763">
    <property type="protein sequence ID" value="AAB00946.1"/>
    <property type="molecule type" value="Genomic_DNA"/>
</dbReference>
<dbReference type="RefSeq" id="WP_012030616.1">
    <property type="nucleotide sequence ID" value="NZ_CP031475.1"/>
</dbReference>
<dbReference type="SMR" id="Q46561"/>
<dbReference type="OMA" id="MQSQYEL"/>
<dbReference type="GO" id="GO:0003677">
    <property type="term" value="F:DNA binding"/>
    <property type="evidence" value="ECO:0007669"/>
    <property type="project" value="UniProtKB-KW"/>
</dbReference>
<dbReference type="CDD" id="cd00093">
    <property type="entry name" value="HTH_XRE"/>
    <property type="match status" value="1"/>
</dbReference>
<dbReference type="Gene3D" id="1.10.260.40">
    <property type="entry name" value="lambda repressor-like DNA-binding domains"/>
    <property type="match status" value="1"/>
</dbReference>
<dbReference type="InterPro" id="IPR001387">
    <property type="entry name" value="Cro/C1-type_HTH"/>
</dbReference>
<dbReference type="InterPro" id="IPR010982">
    <property type="entry name" value="Lambda_DNA-bd_dom_sf"/>
</dbReference>
<dbReference type="InterPro" id="IPR013430">
    <property type="entry name" value="Toxin_antidote_HigA"/>
</dbReference>
<dbReference type="NCBIfam" id="TIGR02607">
    <property type="entry name" value="antidote_HigA"/>
    <property type="match status" value="1"/>
</dbReference>
<dbReference type="PANTHER" id="PTHR36924">
    <property type="entry name" value="ANTITOXIN HIGA-1"/>
    <property type="match status" value="1"/>
</dbReference>
<dbReference type="PANTHER" id="PTHR36924:SF1">
    <property type="entry name" value="ANTITOXIN HIGA-1"/>
    <property type="match status" value="1"/>
</dbReference>
<dbReference type="Pfam" id="PF01381">
    <property type="entry name" value="HTH_3"/>
    <property type="match status" value="1"/>
</dbReference>
<dbReference type="SMART" id="SM00530">
    <property type="entry name" value="HTH_XRE"/>
    <property type="match status" value="1"/>
</dbReference>
<dbReference type="SUPFAM" id="SSF47413">
    <property type="entry name" value="lambda repressor-like DNA-binding domains"/>
    <property type="match status" value="1"/>
</dbReference>
<dbReference type="PROSITE" id="PS50943">
    <property type="entry name" value="HTH_CROC1"/>
    <property type="match status" value="1"/>
</dbReference>